<name>DAPB_MYCBO</name>
<keyword id="KW-0028">Amino-acid biosynthesis</keyword>
<keyword id="KW-0963">Cytoplasm</keyword>
<keyword id="KW-0220">Diaminopimelate biosynthesis</keyword>
<keyword id="KW-0457">Lysine biosynthesis</keyword>
<keyword id="KW-0520">NAD</keyword>
<keyword id="KW-0521">NADP</keyword>
<keyword id="KW-0560">Oxidoreductase</keyword>
<keyword id="KW-1185">Reference proteome</keyword>
<feature type="chain" id="PRO_0000141456" description="4-hydroxy-tetrahydrodipicolinate reductase">
    <location>
        <begin position="1"/>
        <end position="245"/>
    </location>
</feature>
<feature type="active site" description="Proton donor/acceptor" evidence="1">
    <location>
        <position position="132"/>
    </location>
</feature>
<feature type="active site" description="Proton donor" evidence="1">
    <location>
        <position position="136"/>
    </location>
</feature>
<feature type="binding site" evidence="1">
    <location>
        <begin position="7"/>
        <end position="12"/>
    </location>
    <ligand>
        <name>NAD(+)</name>
        <dbReference type="ChEBI" id="CHEBI:57540"/>
    </ligand>
</feature>
<feature type="binding site" evidence="1">
    <location>
        <begin position="75"/>
        <end position="77"/>
    </location>
    <ligand>
        <name>NAD(+)</name>
        <dbReference type="ChEBI" id="CHEBI:57540"/>
    </ligand>
</feature>
<feature type="binding site" evidence="1">
    <location>
        <begin position="102"/>
        <end position="105"/>
    </location>
    <ligand>
        <name>NAD(+)</name>
        <dbReference type="ChEBI" id="CHEBI:57540"/>
    </ligand>
</feature>
<feature type="binding site" evidence="1">
    <location>
        <position position="133"/>
    </location>
    <ligand>
        <name>(S)-2,3,4,5-tetrahydrodipicolinate</name>
        <dbReference type="ChEBI" id="CHEBI:16845"/>
    </ligand>
</feature>
<feature type="binding site" evidence="1">
    <location>
        <begin position="142"/>
        <end position="143"/>
    </location>
    <ligand>
        <name>(S)-2,3,4,5-tetrahydrodipicolinate</name>
        <dbReference type="ChEBI" id="CHEBI:16845"/>
    </ligand>
</feature>
<sequence length="245" mass="25759">MRVGVLGAKGKVGATMVRAVAAADDLTLSAELDAGDPLSLLTDGNTEVVIDFTHPDVVMGNLEFLIDNGIHAVVGTTGFTAERFQQVESWLVAKPNTSVLIAPNFAIGAVLSMHFAKQAARFFDSAEVIELHHPHKAEAPSGTAARTAKLIAEARKGLPPNPDATSTSLPGARGADVDGIPVHAVRLAGLVAHQEVLFGTEGEILTIRHDSLDRTSFVPGVLLAVRRIAERPGLTVGLEPLLDLH</sequence>
<comment type="function">
    <text evidence="1">Catalyzes the conversion of 4-hydroxy-tetrahydrodipicolinate (HTPA) to tetrahydrodipicolinate.</text>
</comment>
<comment type="catalytic activity">
    <reaction evidence="1">
        <text>(S)-2,3,4,5-tetrahydrodipicolinate + NAD(+) + H2O = (2S,4S)-4-hydroxy-2,3,4,5-tetrahydrodipicolinate + NADH + H(+)</text>
        <dbReference type="Rhea" id="RHEA:35323"/>
        <dbReference type="ChEBI" id="CHEBI:15377"/>
        <dbReference type="ChEBI" id="CHEBI:15378"/>
        <dbReference type="ChEBI" id="CHEBI:16845"/>
        <dbReference type="ChEBI" id="CHEBI:57540"/>
        <dbReference type="ChEBI" id="CHEBI:57945"/>
        <dbReference type="ChEBI" id="CHEBI:67139"/>
        <dbReference type="EC" id="1.17.1.8"/>
    </reaction>
</comment>
<comment type="catalytic activity">
    <reaction evidence="1">
        <text>(S)-2,3,4,5-tetrahydrodipicolinate + NADP(+) + H2O = (2S,4S)-4-hydroxy-2,3,4,5-tetrahydrodipicolinate + NADPH + H(+)</text>
        <dbReference type="Rhea" id="RHEA:35331"/>
        <dbReference type="ChEBI" id="CHEBI:15377"/>
        <dbReference type="ChEBI" id="CHEBI:15378"/>
        <dbReference type="ChEBI" id="CHEBI:16845"/>
        <dbReference type="ChEBI" id="CHEBI:57783"/>
        <dbReference type="ChEBI" id="CHEBI:58349"/>
        <dbReference type="ChEBI" id="CHEBI:67139"/>
        <dbReference type="EC" id="1.17.1.8"/>
    </reaction>
</comment>
<comment type="pathway">
    <text evidence="1">Amino-acid biosynthesis; L-lysine biosynthesis via DAP pathway; (S)-tetrahydrodipicolinate from L-aspartate: step 4/4.</text>
</comment>
<comment type="subcellular location">
    <subcellularLocation>
        <location evidence="1">Cytoplasm</location>
    </subcellularLocation>
</comment>
<comment type="similarity">
    <text evidence="1">Belongs to the DapB family.</text>
</comment>
<comment type="caution">
    <text evidence="2">Was originally thought to be a dihydrodipicolinate reductase (DHDPR), catalyzing the conversion of dihydrodipicolinate to tetrahydrodipicolinate. However, it was shown in E.coli that the substrate of the enzymatic reaction is not dihydrodipicolinate (DHDP) but in fact (2S,4S)-4-hydroxy-2,3,4,5-tetrahydrodipicolinic acid (HTPA), the product released by the DapA-catalyzed reaction.</text>
</comment>
<organism>
    <name type="scientific">Mycobacterium bovis (strain ATCC BAA-935 / AF2122/97)</name>
    <dbReference type="NCBI Taxonomy" id="233413"/>
    <lineage>
        <taxon>Bacteria</taxon>
        <taxon>Bacillati</taxon>
        <taxon>Actinomycetota</taxon>
        <taxon>Actinomycetes</taxon>
        <taxon>Mycobacteriales</taxon>
        <taxon>Mycobacteriaceae</taxon>
        <taxon>Mycobacterium</taxon>
        <taxon>Mycobacterium tuberculosis complex</taxon>
    </lineage>
</organism>
<dbReference type="EC" id="1.17.1.8" evidence="1"/>
<dbReference type="EMBL" id="LT708304">
    <property type="protein sequence ID" value="SIU01413.1"/>
    <property type="molecule type" value="Genomic_DNA"/>
</dbReference>
<dbReference type="RefSeq" id="NP_856441.1">
    <property type="nucleotide sequence ID" value="NC_002945.3"/>
</dbReference>
<dbReference type="RefSeq" id="WP_010950771.1">
    <property type="nucleotide sequence ID" value="NC_002945.4"/>
</dbReference>
<dbReference type="SMR" id="Q7TXX0"/>
<dbReference type="KEGG" id="mbo:BQ2027_MB2795C"/>
<dbReference type="PATRIC" id="fig|233413.5.peg.3064"/>
<dbReference type="UniPathway" id="UPA00034">
    <property type="reaction ID" value="UER00018"/>
</dbReference>
<dbReference type="Proteomes" id="UP000001419">
    <property type="component" value="Chromosome"/>
</dbReference>
<dbReference type="GO" id="GO:0005829">
    <property type="term" value="C:cytosol"/>
    <property type="evidence" value="ECO:0007669"/>
    <property type="project" value="TreeGrafter"/>
</dbReference>
<dbReference type="GO" id="GO:0008839">
    <property type="term" value="F:4-hydroxy-tetrahydrodipicolinate reductase"/>
    <property type="evidence" value="ECO:0007669"/>
    <property type="project" value="UniProtKB-EC"/>
</dbReference>
<dbReference type="GO" id="GO:0051287">
    <property type="term" value="F:NAD binding"/>
    <property type="evidence" value="ECO:0007669"/>
    <property type="project" value="UniProtKB-UniRule"/>
</dbReference>
<dbReference type="GO" id="GO:0050661">
    <property type="term" value="F:NADP binding"/>
    <property type="evidence" value="ECO:0007669"/>
    <property type="project" value="UniProtKB-UniRule"/>
</dbReference>
<dbReference type="GO" id="GO:0016726">
    <property type="term" value="F:oxidoreductase activity, acting on CH or CH2 groups, NAD or NADP as acceptor"/>
    <property type="evidence" value="ECO:0007669"/>
    <property type="project" value="UniProtKB-UniRule"/>
</dbReference>
<dbReference type="GO" id="GO:0019877">
    <property type="term" value="P:diaminopimelate biosynthetic process"/>
    <property type="evidence" value="ECO:0007669"/>
    <property type="project" value="UniProtKB-UniRule"/>
</dbReference>
<dbReference type="GO" id="GO:0009089">
    <property type="term" value="P:lysine biosynthetic process via diaminopimelate"/>
    <property type="evidence" value="ECO:0007669"/>
    <property type="project" value="UniProtKB-UniRule"/>
</dbReference>
<dbReference type="CDD" id="cd02274">
    <property type="entry name" value="DHDPR_N"/>
    <property type="match status" value="1"/>
</dbReference>
<dbReference type="FunFam" id="3.30.360.10:FF:000009">
    <property type="entry name" value="4-hydroxy-tetrahydrodipicolinate reductase"/>
    <property type="match status" value="1"/>
</dbReference>
<dbReference type="Gene3D" id="3.30.360.10">
    <property type="entry name" value="Dihydrodipicolinate Reductase, domain 2"/>
    <property type="match status" value="1"/>
</dbReference>
<dbReference type="Gene3D" id="3.40.50.720">
    <property type="entry name" value="NAD(P)-binding Rossmann-like Domain"/>
    <property type="match status" value="1"/>
</dbReference>
<dbReference type="HAMAP" id="MF_00102">
    <property type="entry name" value="DapB"/>
    <property type="match status" value="1"/>
</dbReference>
<dbReference type="InterPro" id="IPR022663">
    <property type="entry name" value="DapB_C"/>
</dbReference>
<dbReference type="InterPro" id="IPR000846">
    <property type="entry name" value="DapB_N"/>
</dbReference>
<dbReference type="InterPro" id="IPR022664">
    <property type="entry name" value="DapB_N_CS"/>
</dbReference>
<dbReference type="InterPro" id="IPR023940">
    <property type="entry name" value="DHDPR_bac"/>
</dbReference>
<dbReference type="InterPro" id="IPR036291">
    <property type="entry name" value="NAD(P)-bd_dom_sf"/>
</dbReference>
<dbReference type="NCBIfam" id="TIGR00036">
    <property type="entry name" value="dapB"/>
    <property type="match status" value="1"/>
</dbReference>
<dbReference type="PANTHER" id="PTHR20836:SF0">
    <property type="entry name" value="4-HYDROXY-TETRAHYDRODIPICOLINATE REDUCTASE 1, CHLOROPLASTIC-RELATED"/>
    <property type="match status" value="1"/>
</dbReference>
<dbReference type="PANTHER" id="PTHR20836">
    <property type="entry name" value="DIHYDRODIPICOLINATE REDUCTASE"/>
    <property type="match status" value="1"/>
</dbReference>
<dbReference type="Pfam" id="PF05173">
    <property type="entry name" value="DapB_C"/>
    <property type="match status" value="1"/>
</dbReference>
<dbReference type="Pfam" id="PF01113">
    <property type="entry name" value="DapB_N"/>
    <property type="match status" value="1"/>
</dbReference>
<dbReference type="PIRSF" id="PIRSF000161">
    <property type="entry name" value="DHPR"/>
    <property type="match status" value="1"/>
</dbReference>
<dbReference type="SUPFAM" id="SSF55347">
    <property type="entry name" value="Glyceraldehyde-3-phosphate dehydrogenase-like, C-terminal domain"/>
    <property type="match status" value="1"/>
</dbReference>
<dbReference type="SUPFAM" id="SSF51735">
    <property type="entry name" value="NAD(P)-binding Rossmann-fold domains"/>
    <property type="match status" value="1"/>
</dbReference>
<dbReference type="PROSITE" id="PS01298">
    <property type="entry name" value="DAPB"/>
    <property type="match status" value="1"/>
</dbReference>
<reference key="1">
    <citation type="journal article" date="2003" name="Proc. Natl. Acad. Sci. U.S.A.">
        <title>The complete genome sequence of Mycobacterium bovis.</title>
        <authorList>
            <person name="Garnier T."/>
            <person name="Eiglmeier K."/>
            <person name="Camus J.-C."/>
            <person name="Medina N."/>
            <person name="Mansoor H."/>
            <person name="Pryor M."/>
            <person name="Duthoy S."/>
            <person name="Grondin S."/>
            <person name="Lacroix C."/>
            <person name="Monsempe C."/>
            <person name="Simon S."/>
            <person name="Harris B."/>
            <person name="Atkin R."/>
            <person name="Doggett J."/>
            <person name="Mayes R."/>
            <person name="Keating L."/>
            <person name="Wheeler P.R."/>
            <person name="Parkhill J."/>
            <person name="Barrell B.G."/>
            <person name="Cole S.T."/>
            <person name="Gordon S.V."/>
            <person name="Hewinson R.G."/>
        </authorList>
    </citation>
    <scope>NUCLEOTIDE SEQUENCE [LARGE SCALE GENOMIC DNA]</scope>
    <source>
        <strain>ATCC BAA-935 / AF2122/97</strain>
    </source>
</reference>
<reference key="2">
    <citation type="journal article" date="2017" name="Genome Announc.">
        <title>Updated reference genome sequence and annotation of Mycobacterium bovis AF2122/97.</title>
        <authorList>
            <person name="Malone K.M."/>
            <person name="Farrell D."/>
            <person name="Stuber T.P."/>
            <person name="Schubert O.T."/>
            <person name="Aebersold R."/>
            <person name="Robbe-Austerman S."/>
            <person name="Gordon S.V."/>
        </authorList>
    </citation>
    <scope>NUCLEOTIDE SEQUENCE [LARGE SCALE GENOMIC DNA]</scope>
    <scope>GENOME REANNOTATION</scope>
    <source>
        <strain>ATCC BAA-935 / AF2122/97</strain>
    </source>
</reference>
<gene>
    <name evidence="1" type="primary">dapB</name>
    <name type="ordered locus">BQ2027_MB2795C</name>
</gene>
<protein>
    <recommendedName>
        <fullName evidence="1">4-hydroxy-tetrahydrodipicolinate reductase</fullName>
        <shortName evidence="1">HTPA reductase</shortName>
        <ecNumber evidence="1">1.17.1.8</ecNumber>
    </recommendedName>
</protein>
<evidence type="ECO:0000255" key="1">
    <source>
        <dbReference type="HAMAP-Rule" id="MF_00102"/>
    </source>
</evidence>
<evidence type="ECO:0000305" key="2"/>
<accession>Q7TXX0</accession>
<accession>A0A1R3Y238</accession>
<accession>X2BLH0</accession>
<proteinExistence type="inferred from homology"/>